<keyword id="KW-0963">Cytoplasm</keyword>
<keyword id="KW-0671">Queuosine biosynthesis</keyword>
<keyword id="KW-0949">S-adenosyl-L-methionine</keyword>
<keyword id="KW-0808">Transferase</keyword>
<accession>Q92IY7</accession>
<reference key="1">
    <citation type="journal article" date="2001" name="Science">
        <title>Mechanisms of evolution in Rickettsia conorii and R. prowazekii.</title>
        <authorList>
            <person name="Ogata H."/>
            <person name="Audic S."/>
            <person name="Renesto-Audiffren P."/>
            <person name="Fournier P.-E."/>
            <person name="Barbe V."/>
            <person name="Samson D."/>
            <person name="Roux V."/>
            <person name="Cossart P."/>
            <person name="Weissenbach J."/>
            <person name="Claverie J.-M."/>
            <person name="Raoult D."/>
        </authorList>
    </citation>
    <scope>NUCLEOTIDE SEQUENCE [LARGE SCALE GENOMIC DNA]</scope>
    <source>
        <strain>ATCC VR-613 / Malish 7</strain>
    </source>
</reference>
<comment type="function">
    <text evidence="1">Transfers and isomerizes the ribose moiety from AdoMet to the 7-aminomethyl group of 7-deazaguanine (preQ1-tRNA) to give epoxyqueuosine (oQ-tRNA).</text>
</comment>
<comment type="catalytic activity">
    <reaction evidence="1">
        <text>7-aminomethyl-7-carbaguanosine(34) in tRNA + S-adenosyl-L-methionine = epoxyqueuosine(34) in tRNA + adenine + L-methionine + 2 H(+)</text>
        <dbReference type="Rhea" id="RHEA:32155"/>
        <dbReference type="Rhea" id="RHEA-COMP:10342"/>
        <dbReference type="Rhea" id="RHEA-COMP:18582"/>
        <dbReference type="ChEBI" id="CHEBI:15378"/>
        <dbReference type="ChEBI" id="CHEBI:16708"/>
        <dbReference type="ChEBI" id="CHEBI:57844"/>
        <dbReference type="ChEBI" id="CHEBI:59789"/>
        <dbReference type="ChEBI" id="CHEBI:82833"/>
        <dbReference type="ChEBI" id="CHEBI:194443"/>
        <dbReference type="EC" id="2.4.99.17"/>
    </reaction>
</comment>
<comment type="pathway">
    <text evidence="1">tRNA modification; tRNA-queuosine biosynthesis.</text>
</comment>
<comment type="subunit">
    <text evidence="1">Monomer.</text>
</comment>
<comment type="subcellular location">
    <subcellularLocation>
        <location evidence="1">Cytoplasm</location>
    </subcellularLocation>
</comment>
<comment type="similarity">
    <text evidence="1">Belongs to the QueA family.</text>
</comment>
<organism>
    <name type="scientific">Rickettsia conorii (strain ATCC VR-613 / Malish 7)</name>
    <dbReference type="NCBI Taxonomy" id="272944"/>
    <lineage>
        <taxon>Bacteria</taxon>
        <taxon>Pseudomonadati</taxon>
        <taxon>Pseudomonadota</taxon>
        <taxon>Alphaproteobacteria</taxon>
        <taxon>Rickettsiales</taxon>
        <taxon>Rickettsiaceae</taxon>
        <taxon>Rickettsieae</taxon>
        <taxon>Rickettsia</taxon>
        <taxon>spotted fever group</taxon>
    </lineage>
</organism>
<name>QUEA_RICCN</name>
<feature type="chain" id="PRO_0000165432" description="S-adenosylmethionine:tRNA ribosyltransferase-isomerase">
    <location>
        <begin position="1"/>
        <end position="365"/>
    </location>
</feature>
<dbReference type="EC" id="2.4.99.17" evidence="1"/>
<dbReference type="EMBL" id="AE006914">
    <property type="protein sequence ID" value="AAL02821.1"/>
    <property type="molecule type" value="Genomic_DNA"/>
</dbReference>
<dbReference type="PIR" id="C97735">
    <property type="entry name" value="C97735"/>
</dbReference>
<dbReference type="RefSeq" id="WP_010976943.1">
    <property type="nucleotide sequence ID" value="NC_003103.1"/>
</dbReference>
<dbReference type="SMR" id="Q92IY7"/>
<dbReference type="GeneID" id="927877"/>
<dbReference type="KEGG" id="rco:RC0283"/>
<dbReference type="PATRIC" id="fig|272944.4.peg.323"/>
<dbReference type="HOGENOM" id="CLU_039110_1_0_5"/>
<dbReference type="UniPathway" id="UPA00392"/>
<dbReference type="Proteomes" id="UP000000816">
    <property type="component" value="Chromosome"/>
</dbReference>
<dbReference type="GO" id="GO:0005737">
    <property type="term" value="C:cytoplasm"/>
    <property type="evidence" value="ECO:0007669"/>
    <property type="project" value="UniProtKB-SubCell"/>
</dbReference>
<dbReference type="GO" id="GO:0051075">
    <property type="term" value="F:S-adenosylmethionine:tRNA ribosyltransferase-isomerase activity"/>
    <property type="evidence" value="ECO:0007669"/>
    <property type="project" value="UniProtKB-EC"/>
</dbReference>
<dbReference type="GO" id="GO:0008616">
    <property type="term" value="P:queuosine biosynthetic process"/>
    <property type="evidence" value="ECO:0007669"/>
    <property type="project" value="UniProtKB-UniRule"/>
</dbReference>
<dbReference type="GO" id="GO:0002099">
    <property type="term" value="P:tRNA wobble guanine modification"/>
    <property type="evidence" value="ECO:0007669"/>
    <property type="project" value="TreeGrafter"/>
</dbReference>
<dbReference type="Gene3D" id="2.40.10.240">
    <property type="entry name" value="QueA-like"/>
    <property type="match status" value="1"/>
</dbReference>
<dbReference type="Gene3D" id="3.40.1780.10">
    <property type="entry name" value="QueA-like"/>
    <property type="match status" value="1"/>
</dbReference>
<dbReference type="HAMAP" id="MF_00113">
    <property type="entry name" value="QueA"/>
    <property type="match status" value="1"/>
</dbReference>
<dbReference type="InterPro" id="IPR003699">
    <property type="entry name" value="QueA"/>
</dbReference>
<dbReference type="InterPro" id="IPR042118">
    <property type="entry name" value="QueA_dom1"/>
</dbReference>
<dbReference type="InterPro" id="IPR042119">
    <property type="entry name" value="QueA_dom2"/>
</dbReference>
<dbReference type="InterPro" id="IPR036100">
    <property type="entry name" value="QueA_sf"/>
</dbReference>
<dbReference type="NCBIfam" id="NF002398">
    <property type="entry name" value="PRK01424.1"/>
    <property type="match status" value="1"/>
</dbReference>
<dbReference type="PANTHER" id="PTHR30307">
    <property type="entry name" value="S-ADENOSYLMETHIONINE:TRNA RIBOSYLTRANSFERASE-ISOMERASE"/>
    <property type="match status" value="1"/>
</dbReference>
<dbReference type="PANTHER" id="PTHR30307:SF0">
    <property type="entry name" value="S-ADENOSYLMETHIONINE:TRNA RIBOSYLTRANSFERASE-ISOMERASE"/>
    <property type="match status" value="1"/>
</dbReference>
<dbReference type="Pfam" id="PF02547">
    <property type="entry name" value="Queuosine_synth"/>
    <property type="match status" value="1"/>
</dbReference>
<dbReference type="SUPFAM" id="SSF111337">
    <property type="entry name" value="QueA-like"/>
    <property type="match status" value="1"/>
</dbReference>
<protein>
    <recommendedName>
        <fullName evidence="1">S-adenosylmethionine:tRNA ribosyltransferase-isomerase</fullName>
        <ecNumber evidence="1">2.4.99.17</ecNumber>
    </recommendedName>
    <alternativeName>
        <fullName evidence="1">Queuosine biosynthesis protein QueA</fullName>
    </alternativeName>
</protein>
<proteinExistence type="inferred from homology"/>
<sequence>MKLSDFDFDLPSELIAQYPSSERDNSDLLIAVTPPIKTKFYNIIDYLKEGDLLVFNNSKVIKAKLNLGKNITINLNQKLSDDNWSAFAKPARKLHVNDEFYFDNHKVIITEKLAMGEIKVKFELNDISVFEFLNKYGEMPLPVYIRRSHSLCHPVATTTGSKTYLNNDWIPWSNHGMTNTQNDNDRYQTVYSQIEGSVAAPTAGLHFTKDILDKLKAEGIQATFLTLHVGAGTFLPVKTENIHEHKMHTEYCSITPDTAEIINKAKQEGKRIIAVGTTTLRTLESSCNNGIVKAGSFKTDIFITPGFKFQTADMLLTNFHFPKSTLFMLICAFAGFKEMHELYKYAIKEAMRFFSYGDATLLCRK</sequence>
<evidence type="ECO:0000255" key="1">
    <source>
        <dbReference type="HAMAP-Rule" id="MF_00113"/>
    </source>
</evidence>
<gene>
    <name evidence="1" type="primary">queA</name>
    <name type="ordered locus">RC0283</name>
</gene>